<proteinExistence type="evidence at protein level"/>
<feature type="chain" id="PRO_0000223915" description="Keratin-associated protein 24-1">
    <location>
        <begin position="1"/>
        <end position="254"/>
    </location>
</feature>
<feature type="repeat" description="1">
    <location>
        <begin position="193"/>
        <end position="202"/>
    </location>
</feature>
<feature type="repeat" description="2">
    <location>
        <begin position="203"/>
        <end position="212"/>
    </location>
</feature>
<feature type="repeat" description="3">
    <location>
        <begin position="213"/>
        <end position="222"/>
    </location>
</feature>
<feature type="repeat" description="4">
    <location>
        <begin position="223"/>
        <end position="232"/>
    </location>
</feature>
<feature type="repeat" description="5">
    <location>
        <begin position="233"/>
        <end position="242"/>
    </location>
</feature>
<feature type="repeat" description="6">
    <location>
        <begin position="243"/>
        <end position="252"/>
    </location>
</feature>
<feature type="region of interest" description="6 X 10 AA repeats of Y-[ILR]-[SVPC]-[NRTS]-[SNTG]-X-[QHRP]-[PSY]-[QSL]-[SRK]">
    <location>
        <begin position="193"/>
        <end position="252"/>
    </location>
</feature>
<name>KR241_HUMAN</name>
<protein>
    <recommendedName>
        <fullName>Keratin-associated protein 24-1</fullName>
    </recommendedName>
</protein>
<gene>
    <name type="primary">KRTAP24-1</name>
    <name type="synonym">KAP24.1</name>
</gene>
<accession>Q3LI83</accession>
<accession>Q1XDX0</accession>
<comment type="function">
    <text>In the hair cortex, hair keratin intermediate filaments are embedded in an interfilamentous matrix, consisting of hair keratin-associated proteins (KRTAP), which are essential for the formation of a rigid and resistant hair shaft through their extensive disulfide bond cross-linking with abundant cysteine residues of hair keratins. The matrix proteins include the high-sulfur and high-glycine-tyrosine keratins.</text>
</comment>
<comment type="subunit">
    <text evidence="1">Interacts with hair keratins.</text>
</comment>
<comment type="tissue specificity">
    <text evidence="2">Specific expression in the middle/upper hair cuticle.</text>
</comment>
<comment type="miscellaneous">
    <text>Has a low cysteine content when compared to the majority of known KAP family members. Possesses several C-terminal tyrosine-containing tandem decameric repeat structures.</text>
</comment>
<comment type="similarity">
    <text evidence="3">Belongs to the PMG family.</text>
</comment>
<comment type="caution">
    <text evidence="3">It is uncertain whether Met-1 or Met-6 is the initiator.</text>
</comment>
<keyword id="KW-0416">Keratin</keyword>
<keyword id="KW-1267">Proteomics identification</keyword>
<keyword id="KW-1185">Reference proteome</keyword>
<keyword id="KW-0677">Repeat</keyword>
<organism>
    <name type="scientific">Homo sapiens</name>
    <name type="common">Human</name>
    <dbReference type="NCBI Taxonomy" id="9606"/>
    <lineage>
        <taxon>Eukaryota</taxon>
        <taxon>Metazoa</taxon>
        <taxon>Chordata</taxon>
        <taxon>Craniata</taxon>
        <taxon>Vertebrata</taxon>
        <taxon>Euteleostomi</taxon>
        <taxon>Mammalia</taxon>
        <taxon>Eutheria</taxon>
        <taxon>Euarchontoglires</taxon>
        <taxon>Primates</taxon>
        <taxon>Haplorrhini</taxon>
        <taxon>Catarrhini</taxon>
        <taxon>Hominidae</taxon>
        <taxon>Homo</taxon>
    </lineage>
</organism>
<reference key="1">
    <citation type="submission" date="2002-11" db="EMBL/GenBank/DDBJ databases">
        <title>Identification of complete keratin-associated protein (KAP) gene cluster spanning 800 kb region on human chromosome 21q22.11.</title>
        <authorList>
            <person name="Obayashi I."/>
            <person name="Shibuya K."/>
            <person name="Minoshima S."/>
            <person name="Kudoh J."/>
            <person name="Shimizu N."/>
        </authorList>
    </citation>
    <scope>NUCLEOTIDE SEQUENCE [MRNA]</scope>
    <source>
        <tissue>Hair root</tissue>
    </source>
</reference>
<reference key="2">
    <citation type="journal article" date="2007" name="J. Invest. Dermatol.">
        <title>Characterization of human KAP24.1, a cuticular hair keratin-associated protein with unusual amino-acid composition and repeat structure.</title>
        <authorList>
            <person name="Rogers M.A."/>
            <person name="Winter H."/>
            <person name="Langbein L."/>
            <person name="Wollschlaeger A."/>
            <person name="Praetzel-Wunder S."/>
            <person name="Jave-Suarez L.F."/>
            <person name="Schweizer J."/>
        </authorList>
    </citation>
    <scope>NUCLEOTIDE SEQUENCE [MRNA]</scope>
    <scope>TISSUE SPECIFICITY</scope>
    <source>
        <tissue>Scalp</tissue>
    </source>
</reference>
<sequence>MPAGSMSTTGYPGVCSTTSYRTHCYIPVTSSVTLSSSDLSPTFGHCLPSSYQGNLWLLDYCQESYGEAPTCKSPSCEPKTCSTTGCDPSNSSVPCNSPSAGQVFSVCETTNVSPSPSCSPSTQTNGYVCNCHIPTRNASKACQTLRNGSNCFGQLNCLSKSFQTLNHCRLSTLGYKSYQNPCFIPSYVSPLCYISNSCQPQSYLVRNYHYSSYRPTSCRPLSYLSRSFRSLSYIPSTFPPLRYLCSGSRPLKCY</sequence>
<dbReference type="EMBL" id="AB096935">
    <property type="protein sequence ID" value="BAE46350.1"/>
    <property type="molecule type" value="mRNA"/>
</dbReference>
<dbReference type="EMBL" id="AM238513">
    <property type="protein sequence ID" value="CAJ87483.1"/>
    <property type="molecule type" value="mRNA"/>
</dbReference>
<dbReference type="CCDS" id="CCDS42915.1"/>
<dbReference type="RefSeq" id="NP_001078924.1">
    <property type="nucleotide sequence ID" value="NM_001085455.3"/>
</dbReference>
<dbReference type="FunCoup" id="Q3LI83">
    <property type="interactions" value="8"/>
</dbReference>
<dbReference type="STRING" id="9606.ENSP00000339238"/>
<dbReference type="PhosphoSitePlus" id="Q3LI83"/>
<dbReference type="BioMuta" id="KRTAP24-1"/>
<dbReference type="DMDM" id="88909179"/>
<dbReference type="MassIVE" id="Q3LI83"/>
<dbReference type="PaxDb" id="9606-ENSP00000339238"/>
<dbReference type="PeptideAtlas" id="Q3LI83"/>
<dbReference type="ProteomicsDB" id="61775"/>
<dbReference type="Antibodypedia" id="22462">
    <property type="antibodies" value="27 antibodies from 13 providers"/>
</dbReference>
<dbReference type="DNASU" id="643803"/>
<dbReference type="Ensembl" id="ENST00000340345.6">
    <property type="protein sequence ID" value="ENSP00000339238.4"/>
    <property type="gene ID" value="ENSG00000188694.6"/>
</dbReference>
<dbReference type="GeneID" id="643803"/>
<dbReference type="KEGG" id="hsa:643803"/>
<dbReference type="MANE-Select" id="ENST00000340345.6">
    <property type="protein sequence ID" value="ENSP00000339238.4"/>
    <property type="RefSeq nucleotide sequence ID" value="NM_001085455.3"/>
    <property type="RefSeq protein sequence ID" value="NP_001078924.1"/>
</dbReference>
<dbReference type="UCSC" id="uc002ynv.3">
    <property type="organism name" value="human"/>
</dbReference>
<dbReference type="AGR" id="HGNC:33902"/>
<dbReference type="CTD" id="643803"/>
<dbReference type="GeneCards" id="KRTAP24-1"/>
<dbReference type="HGNC" id="HGNC:33902">
    <property type="gene designation" value="KRTAP24-1"/>
</dbReference>
<dbReference type="HPA" id="ENSG00000188694">
    <property type="expression patterns" value="Tissue enriched (skin)"/>
</dbReference>
<dbReference type="MIM" id="618927">
    <property type="type" value="gene"/>
</dbReference>
<dbReference type="neXtProt" id="NX_Q3LI83"/>
<dbReference type="PharmGKB" id="PA162393751"/>
<dbReference type="VEuPathDB" id="HostDB:ENSG00000188694"/>
<dbReference type="eggNOG" id="ENOG502RR8N">
    <property type="taxonomic scope" value="Eukaryota"/>
</dbReference>
<dbReference type="GeneTree" id="ENSGT00390000001157"/>
<dbReference type="HOGENOM" id="CLU_1146869_0_0_1"/>
<dbReference type="InParanoid" id="Q3LI83"/>
<dbReference type="OMA" id="LWLLDNC"/>
<dbReference type="OrthoDB" id="9834169at2759"/>
<dbReference type="PAN-GO" id="Q3LI83">
    <property type="GO annotations" value="0 GO annotations based on evolutionary models"/>
</dbReference>
<dbReference type="PhylomeDB" id="Q3LI83"/>
<dbReference type="TreeFam" id="TF337331"/>
<dbReference type="PathwayCommons" id="Q3LI83"/>
<dbReference type="Reactome" id="R-HSA-6805567">
    <property type="pathway name" value="Keratinization"/>
</dbReference>
<dbReference type="BioGRID-ORCS" id="643803">
    <property type="hits" value="13 hits in 1140 CRISPR screens"/>
</dbReference>
<dbReference type="GenomeRNAi" id="643803"/>
<dbReference type="Pharos" id="Q3LI83">
    <property type="development level" value="Tdark"/>
</dbReference>
<dbReference type="PRO" id="PR:Q3LI83"/>
<dbReference type="Proteomes" id="UP000005640">
    <property type="component" value="Chromosome 21"/>
</dbReference>
<dbReference type="RNAct" id="Q3LI83">
    <property type="molecule type" value="protein"/>
</dbReference>
<dbReference type="Bgee" id="ENSG00000188694">
    <property type="expression patterns" value="Expressed in skin of abdomen and 2 other cell types or tissues"/>
</dbReference>
<dbReference type="GO" id="GO:0005829">
    <property type="term" value="C:cytosol"/>
    <property type="evidence" value="ECO:0000304"/>
    <property type="project" value="Reactome"/>
</dbReference>
<dbReference type="GO" id="GO:0045095">
    <property type="term" value="C:keratin filament"/>
    <property type="evidence" value="ECO:0007669"/>
    <property type="project" value="InterPro"/>
</dbReference>
<dbReference type="GO" id="GO:0005198">
    <property type="term" value="F:structural molecule activity"/>
    <property type="evidence" value="ECO:0007669"/>
    <property type="project" value="InterPro"/>
</dbReference>
<dbReference type="InterPro" id="IPR007659">
    <property type="entry name" value="Keratin_matx"/>
</dbReference>
<dbReference type="InterPro" id="IPR007951">
    <property type="entry name" value="KRTAP_PMG"/>
</dbReference>
<dbReference type="PANTHER" id="PTHR23260">
    <property type="entry name" value="KERATIN ASSOCIATED PROTEIN 3-3-RELATED"/>
    <property type="match status" value="1"/>
</dbReference>
<dbReference type="PANTHER" id="PTHR23260:SF2">
    <property type="entry name" value="KERATIN-ASSOCIATED PROTEIN 24-1"/>
    <property type="match status" value="1"/>
</dbReference>
<dbReference type="Pfam" id="PF05287">
    <property type="entry name" value="PMG"/>
    <property type="match status" value="1"/>
</dbReference>
<evidence type="ECO:0000250" key="1"/>
<evidence type="ECO:0000269" key="2">
    <source>
    </source>
</evidence>
<evidence type="ECO:0000305" key="3"/>